<name>PRS6B_ASPNG</name>
<protein>
    <recommendedName>
        <fullName>26S proteasome regulatory subunit 6B homolog</fullName>
    </recommendedName>
</protein>
<proteinExistence type="inferred from homology"/>
<keyword id="KW-0067">ATP-binding</keyword>
<keyword id="KW-0963">Cytoplasm</keyword>
<keyword id="KW-0547">Nucleotide-binding</keyword>
<keyword id="KW-0539">Nucleus</keyword>
<keyword id="KW-0647">Proteasome</keyword>
<dbReference type="EMBL" id="U15601">
    <property type="protein sequence ID" value="AAB40510.1"/>
    <property type="molecule type" value="Genomic_DNA"/>
</dbReference>
<dbReference type="SMR" id="P78578"/>
<dbReference type="PaxDb" id="5061-CADANGAP00002173"/>
<dbReference type="VEuPathDB" id="FungiDB:An02g07190"/>
<dbReference type="VEuPathDB" id="FungiDB:ASPNIDRAFT2_1144750"/>
<dbReference type="VEuPathDB" id="FungiDB:ATCC64974_56930"/>
<dbReference type="VEuPathDB" id="FungiDB:M747DRAFT_315407"/>
<dbReference type="eggNOG" id="KOG0727">
    <property type="taxonomic scope" value="Eukaryota"/>
</dbReference>
<dbReference type="GO" id="GO:0005737">
    <property type="term" value="C:cytoplasm"/>
    <property type="evidence" value="ECO:0007669"/>
    <property type="project" value="UniProtKB-SubCell"/>
</dbReference>
<dbReference type="GO" id="GO:0005634">
    <property type="term" value="C:nucleus"/>
    <property type="evidence" value="ECO:0007669"/>
    <property type="project" value="UniProtKB-SubCell"/>
</dbReference>
<dbReference type="GO" id="GO:0008540">
    <property type="term" value="C:proteasome regulatory particle, base subcomplex"/>
    <property type="evidence" value="ECO:0007669"/>
    <property type="project" value="UniProtKB-ARBA"/>
</dbReference>
<dbReference type="GO" id="GO:0005524">
    <property type="term" value="F:ATP binding"/>
    <property type="evidence" value="ECO:0007669"/>
    <property type="project" value="UniProtKB-KW"/>
</dbReference>
<dbReference type="GO" id="GO:0016887">
    <property type="term" value="F:ATP hydrolysis activity"/>
    <property type="evidence" value="ECO:0007669"/>
    <property type="project" value="InterPro"/>
</dbReference>
<dbReference type="CDD" id="cd19502">
    <property type="entry name" value="RecA-like_PAN_like"/>
    <property type="match status" value="1"/>
</dbReference>
<dbReference type="FunFam" id="1.10.8.60:FF:000020">
    <property type="entry name" value="26S protease regulatory subunit 6B"/>
    <property type="match status" value="1"/>
</dbReference>
<dbReference type="FunFam" id="2.40.50.140:FF:000049">
    <property type="entry name" value="26S protease regulatory subunit 6B"/>
    <property type="match status" value="1"/>
</dbReference>
<dbReference type="FunFam" id="3.40.50.300:FF:000033">
    <property type="entry name" value="26S protease regulatory subunit 6B"/>
    <property type="match status" value="1"/>
</dbReference>
<dbReference type="Gene3D" id="1.10.8.60">
    <property type="match status" value="1"/>
</dbReference>
<dbReference type="Gene3D" id="2.40.50.140">
    <property type="entry name" value="Nucleic acid-binding proteins"/>
    <property type="match status" value="1"/>
</dbReference>
<dbReference type="Gene3D" id="3.40.50.300">
    <property type="entry name" value="P-loop containing nucleotide triphosphate hydrolases"/>
    <property type="match status" value="1"/>
</dbReference>
<dbReference type="InterPro" id="IPR050221">
    <property type="entry name" value="26S_Proteasome_ATPase"/>
</dbReference>
<dbReference type="InterPro" id="IPR003593">
    <property type="entry name" value="AAA+_ATPase"/>
</dbReference>
<dbReference type="InterPro" id="IPR003959">
    <property type="entry name" value="ATPase_AAA_core"/>
</dbReference>
<dbReference type="InterPro" id="IPR003960">
    <property type="entry name" value="ATPase_AAA_CS"/>
</dbReference>
<dbReference type="InterPro" id="IPR012340">
    <property type="entry name" value="NA-bd_OB-fold"/>
</dbReference>
<dbReference type="InterPro" id="IPR027417">
    <property type="entry name" value="P-loop_NTPase"/>
</dbReference>
<dbReference type="InterPro" id="IPR032501">
    <property type="entry name" value="Prot_ATP_ID_OB_2nd"/>
</dbReference>
<dbReference type="PANTHER" id="PTHR23073">
    <property type="entry name" value="26S PROTEASOME REGULATORY SUBUNIT"/>
    <property type="match status" value="1"/>
</dbReference>
<dbReference type="Pfam" id="PF00004">
    <property type="entry name" value="AAA"/>
    <property type="match status" value="1"/>
</dbReference>
<dbReference type="Pfam" id="PF16450">
    <property type="entry name" value="Prot_ATP_ID_OB_C"/>
    <property type="match status" value="1"/>
</dbReference>
<dbReference type="SMART" id="SM00382">
    <property type="entry name" value="AAA"/>
    <property type="match status" value="1"/>
</dbReference>
<dbReference type="SUPFAM" id="SSF52540">
    <property type="entry name" value="P-loop containing nucleoside triphosphate hydrolases"/>
    <property type="match status" value="1"/>
</dbReference>
<dbReference type="PROSITE" id="PS00674">
    <property type="entry name" value="AAA"/>
    <property type="match status" value="1"/>
</dbReference>
<evidence type="ECO:0000250" key="1"/>
<evidence type="ECO:0000255" key="2"/>
<evidence type="ECO:0000305" key="3"/>
<reference key="1">
    <citation type="submission" date="1997-01" db="EMBL/GenBank/DDBJ databases">
        <title>Cloning and characterization of the tbpA gene of A. niger homologue of the human TBP-7 gene encoding the subunit 6 of the 26S proteasome.</title>
        <authorList>
            <person name="Deleu C."/>
            <person name="Jarai G."/>
            <person name="Buxton F."/>
        </authorList>
    </citation>
    <scope>NUCLEOTIDE SEQUENCE [GENOMIC DNA]</scope>
    <source>
        <strain>ATCC 9029 / NRRL 3 / CBS 120.49 / DSM 2466 / N400 / FGSC 732</strain>
    </source>
</reference>
<gene>
    <name type="primary">tbpA</name>
</gene>
<accession>P78578</accession>
<organism>
    <name type="scientific">Aspergillus niger</name>
    <dbReference type="NCBI Taxonomy" id="5061"/>
    <lineage>
        <taxon>Eukaryota</taxon>
        <taxon>Fungi</taxon>
        <taxon>Dikarya</taxon>
        <taxon>Ascomycota</taxon>
        <taxon>Pezizomycotina</taxon>
        <taxon>Eurotiomycetes</taxon>
        <taxon>Eurotiomycetidae</taxon>
        <taxon>Eurotiales</taxon>
        <taxon>Aspergillaceae</taxon>
        <taxon>Aspergillus</taxon>
        <taxon>Aspergillus subgen. Circumdati</taxon>
    </lineage>
</organism>
<comment type="function">
    <text evidence="1">The 26S proteasome is involved in the ATP-dependent degradation of ubiquitinated proteins. The regulatory (or ATPase) complex confers ATP dependency and substrate specificity to the 26S complex (By similarity).</text>
</comment>
<comment type="subcellular location">
    <subcellularLocation>
        <location evidence="3">Cytoplasm</location>
    </subcellularLocation>
    <subcellularLocation>
        <location evidence="3">Nucleus</location>
    </subcellularLocation>
</comment>
<comment type="similarity">
    <text evidence="3">Belongs to the AAA ATPase family.</text>
</comment>
<sequence length="423" mass="47223">MGDVAVETPANNVTPLTKAAPLDTIPNIDSLEGTGNDGSDEYATLKRLQRHLEYIQLQEEYIKDEQRSLKRELVRAQEEIKRIQSVPLVIGQFMEAIDQNTGIVQSSTGSNYVVRILSTLDREKLKPSSSVALHRHSNALVDILPPEADSSIAMLGENEKPDVTYADVGGLDMQKQEIREAVELPLTQFDLYKQIGIDPPRGVLLYGPPGTGKTMLVKAVANSTTASFIRVNGSEFVQKYLGEGPRMVRDVFRMARENSPAIIFIDEIDAIATKRFDAQTGADREVQRILLELLNQMDGFEQSSNVKVIMATNRADTLDPALLRPGRLDRKIEFPSLRDRRERRLIFSTIASKMSLSPEVDLDSLIVRNEPLSGAVIAAIMQEAGLRAVRKNRYNIIPRSDLEDAYAAQVKTGQEADRLEFYR</sequence>
<feature type="chain" id="PRO_0000084694" description="26S proteasome regulatory subunit 6B homolog">
    <location>
        <begin position="1"/>
        <end position="423"/>
    </location>
</feature>
<feature type="binding site" evidence="2">
    <location>
        <begin position="207"/>
        <end position="214"/>
    </location>
    <ligand>
        <name>ATP</name>
        <dbReference type="ChEBI" id="CHEBI:30616"/>
    </ligand>
</feature>